<sequence length="453" mass="50205">MAQKLEAIGRGLQWDDSSDHDNVTKILVRGGREGIQYVKFDYVKSGQPQTGLIHGLSGRGGFTQTFEIDQKDEHLVSVEGYYDVTKGVIQALKFKTNKKTSEMIGYDDTGIKLSLEVKGKKIIGFHGYAETNLNSLGAYFTTTGPIGLNPQVGHIKLAYQGGGGGIPWDHGPNHNGVKRVSFIFDENEIRQWRVDYDDGGVIRQYEPINGYDMFEVKEYPTEYIISVECTYDDVIPRSGRRMIRSIMFKTSKGRVSPIFGYPAARKFVLENNGGALIGFHGRVGAGIDALGAYFSSFIPSPPPPSPEKLQPEGGEAVGDPWDDGIFNGVREIHLEDGEGIALKFVYDKDVQVTELKVHGEPSGIGFNEFKLDYPSEYITTVEGFWDKTSGNERGVITRLRFTTNKQTFRPVGLESTTSFSLGKEGYKIVGFHGNSSTDKLHQLGVYVVPITRE</sequence>
<feature type="initiator methionine" description="Removed" evidence="1">
    <location>
        <position position="1"/>
    </location>
</feature>
<feature type="chain" id="PRO_0000430397" description="Jacalin-related lectin 40">
    <location>
        <begin position="2"/>
        <end position="453"/>
    </location>
</feature>
<feature type="domain" description="Jacalin-type lectin 1" evidence="2">
    <location>
        <begin position="1"/>
        <end position="142"/>
    </location>
</feature>
<feature type="domain" description="Jacalin-type lectin 2" evidence="2">
    <location>
        <begin position="154"/>
        <end position="296"/>
    </location>
</feature>
<feature type="domain" description="Jacalin-type lectin 3" evidence="2">
    <location>
        <begin position="306"/>
        <end position="449"/>
    </location>
</feature>
<feature type="modified residue" description="N-acetylalanine" evidence="1">
    <location>
        <position position="2"/>
    </location>
</feature>
<keyword id="KW-0007">Acetylation</keyword>
<keyword id="KW-0430">Lectin</keyword>
<keyword id="KW-1185">Reference proteome</keyword>
<keyword id="KW-0677">Repeat</keyword>
<organism>
    <name type="scientific">Arabidopsis thaliana</name>
    <name type="common">Mouse-ear cress</name>
    <dbReference type="NCBI Taxonomy" id="3702"/>
    <lineage>
        <taxon>Eukaryota</taxon>
        <taxon>Viridiplantae</taxon>
        <taxon>Streptophyta</taxon>
        <taxon>Embryophyta</taxon>
        <taxon>Tracheophyta</taxon>
        <taxon>Spermatophyta</taxon>
        <taxon>Magnoliopsida</taxon>
        <taxon>eudicotyledons</taxon>
        <taxon>Gunneridae</taxon>
        <taxon>Pentapetalae</taxon>
        <taxon>rosids</taxon>
        <taxon>malvids</taxon>
        <taxon>Brassicales</taxon>
        <taxon>Brassicaceae</taxon>
        <taxon>Camelineae</taxon>
        <taxon>Arabidopsis</taxon>
    </lineage>
</organism>
<dbReference type="EMBL" id="AF262043">
    <property type="protein sequence ID" value="AAF88016.1"/>
    <property type="molecule type" value="Genomic_DNA"/>
</dbReference>
<dbReference type="EMBL" id="CP002688">
    <property type="protein sequence ID" value="AED93810.1"/>
    <property type="molecule type" value="Genomic_DNA"/>
</dbReference>
<dbReference type="EMBL" id="CP002688">
    <property type="protein sequence ID" value="ANM68398.1"/>
    <property type="molecule type" value="Genomic_DNA"/>
</dbReference>
<dbReference type="EMBL" id="DQ446994">
    <property type="protein sequence ID" value="ABE66186.1"/>
    <property type="molecule type" value="mRNA"/>
</dbReference>
<dbReference type="RefSeq" id="NP_001330158.1">
    <property type="nucleotide sequence ID" value="NM_001344072.1"/>
</dbReference>
<dbReference type="RefSeq" id="NP_198204.3">
    <property type="nucleotide sequence ID" value="NM_122735.4"/>
</dbReference>
<dbReference type="SMR" id="Q9LKR6"/>
<dbReference type="FunCoup" id="Q9LKR6">
    <property type="interactions" value="10"/>
</dbReference>
<dbReference type="STRING" id="3702.Q9LKR6"/>
<dbReference type="iPTMnet" id="Q9LKR6"/>
<dbReference type="PaxDb" id="3702-AT5G28520.1"/>
<dbReference type="EnsemblPlants" id="AT5G28520.1">
    <property type="protein sequence ID" value="AT5G28520.1"/>
    <property type="gene ID" value="AT5G28520"/>
</dbReference>
<dbReference type="EnsemblPlants" id="AT5G28520.2">
    <property type="protein sequence ID" value="AT5G28520.2"/>
    <property type="gene ID" value="AT5G28520"/>
</dbReference>
<dbReference type="GeneID" id="832945"/>
<dbReference type="Gramene" id="AT5G28520.1">
    <property type="protein sequence ID" value="AT5G28520.1"/>
    <property type="gene ID" value="AT5G28520"/>
</dbReference>
<dbReference type="Gramene" id="AT5G28520.2">
    <property type="protein sequence ID" value="AT5G28520.2"/>
    <property type="gene ID" value="AT5G28520"/>
</dbReference>
<dbReference type="KEGG" id="ath:AT5G28520"/>
<dbReference type="Araport" id="AT5G28520"/>
<dbReference type="TAIR" id="AT5G28520"/>
<dbReference type="HOGENOM" id="CLU_041730_0_0_1"/>
<dbReference type="InParanoid" id="Q9LKR6"/>
<dbReference type="PhylomeDB" id="Q9LKR6"/>
<dbReference type="PRO" id="PR:Q9LKR6"/>
<dbReference type="Proteomes" id="UP000006548">
    <property type="component" value="Chromosome 5"/>
</dbReference>
<dbReference type="ExpressionAtlas" id="Q9LKR6">
    <property type="expression patterns" value="baseline and differential"/>
</dbReference>
<dbReference type="GO" id="GO:0030246">
    <property type="term" value="F:carbohydrate binding"/>
    <property type="evidence" value="ECO:0007669"/>
    <property type="project" value="UniProtKB-KW"/>
</dbReference>
<dbReference type="GO" id="GO:0009737">
    <property type="term" value="P:response to abscisic acid"/>
    <property type="evidence" value="ECO:0000270"/>
    <property type="project" value="TAIR"/>
</dbReference>
<dbReference type="CDD" id="cd09612">
    <property type="entry name" value="Jacalin"/>
    <property type="match status" value="3"/>
</dbReference>
<dbReference type="FunFam" id="2.100.10.30:FF:000001">
    <property type="entry name" value="Jacalin-related lectin 33"/>
    <property type="match status" value="3"/>
</dbReference>
<dbReference type="Gene3D" id="2.100.10.30">
    <property type="entry name" value="Jacalin-like lectin domain"/>
    <property type="match status" value="3"/>
</dbReference>
<dbReference type="InterPro" id="IPR001229">
    <property type="entry name" value="Jacalin-like_lectin_dom"/>
</dbReference>
<dbReference type="InterPro" id="IPR033734">
    <property type="entry name" value="Jacalin-like_lectin_dom_plant"/>
</dbReference>
<dbReference type="InterPro" id="IPR036404">
    <property type="entry name" value="Jacalin-like_lectin_dom_sf"/>
</dbReference>
<dbReference type="PANTHER" id="PTHR47293:SF66">
    <property type="entry name" value="JACALIN-RELATED LECTIN 11-RELATED"/>
    <property type="match status" value="1"/>
</dbReference>
<dbReference type="PANTHER" id="PTHR47293">
    <property type="entry name" value="JACALIN-RELATED LECTIN 3"/>
    <property type="match status" value="1"/>
</dbReference>
<dbReference type="Pfam" id="PF01419">
    <property type="entry name" value="Jacalin"/>
    <property type="match status" value="3"/>
</dbReference>
<dbReference type="SMART" id="SM00915">
    <property type="entry name" value="Jacalin"/>
    <property type="match status" value="3"/>
</dbReference>
<dbReference type="SUPFAM" id="SSF51101">
    <property type="entry name" value="Mannose-binding lectins"/>
    <property type="match status" value="3"/>
</dbReference>
<dbReference type="PROSITE" id="PS51752">
    <property type="entry name" value="JACALIN_LECTIN"/>
    <property type="match status" value="3"/>
</dbReference>
<gene>
    <name type="primary">JAL40</name>
    <name type="ordered locus">At5g28520</name>
    <name type="ORF">T26D3.3</name>
</gene>
<reference key="1">
    <citation type="journal article" date="2000" name="Nature">
        <title>Sequence and analysis of chromosome 5 of the plant Arabidopsis thaliana.</title>
        <authorList>
            <person name="Tabata S."/>
            <person name="Kaneko T."/>
            <person name="Nakamura Y."/>
            <person name="Kotani H."/>
            <person name="Kato T."/>
            <person name="Asamizu E."/>
            <person name="Miyajima N."/>
            <person name="Sasamoto S."/>
            <person name="Kimura T."/>
            <person name="Hosouchi T."/>
            <person name="Kawashima K."/>
            <person name="Kohara M."/>
            <person name="Matsumoto M."/>
            <person name="Matsuno A."/>
            <person name="Muraki A."/>
            <person name="Nakayama S."/>
            <person name="Nakazaki N."/>
            <person name="Naruo K."/>
            <person name="Okumura S."/>
            <person name="Shinpo S."/>
            <person name="Takeuchi C."/>
            <person name="Wada T."/>
            <person name="Watanabe A."/>
            <person name="Yamada M."/>
            <person name="Yasuda M."/>
            <person name="Sato S."/>
            <person name="de la Bastide M."/>
            <person name="Huang E."/>
            <person name="Spiegel L."/>
            <person name="Gnoj L."/>
            <person name="O'Shaughnessy A."/>
            <person name="Preston R."/>
            <person name="Habermann K."/>
            <person name="Murray J."/>
            <person name="Johnson D."/>
            <person name="Rohlfing T."/>
            <person name="Nelson J."/>
            <person name="Stoneking T."/>
            <person name="Pepin K."/>
            <person name="Spieth J."/>
            <person name="Sekhon M."/>
            <person name="Armstrong J."/>
            <person name="Becker M."/>
            <person name="Belter E."/>
            <person name="Cordum H."/>
            <person name="Cordes M."/>
            <person name="Courtney L."/>
            <person name="Courtney W."/>
            <person name="Dante M."/>
            <person name="Du H."/>
            <person name="Edwards J."/>
            <person name="Fryman J."/>
            <person name="Haakensen B."/>
            <person name="Lamar E."/>
            <person name="Latreille P."/>
            <person name="Leonard S."/>
            <person name="Meyer R."/>
            <person name="Mulvaney E."/>
            <person name="Ozersky P."/>
            <person name="Riley A."/>
            <person name="Strowmatt C."/>
            <person name="Wagner-McPherson C."/>
            <person name="Wollam A."/>
            <person name="Yoakum M."/>
            <person name="Bell M."/>
            <person name="Dedhia N."/>
            <person name="Parnell L."/>
            <person name="Shah R."/>
            <person name="Rodriguez M."/>
            <person name="Hoon See L."/>
            <person name="Vil D."/>
            <person name="Baker J."/>
            <person name="Kirchoff K."/>
            <person name="Toth K."/>
            <person name="King L."/>
            <person name="Bahret A."/>
            <person name="Miller B."/>
            <person name="Marra M.A."/>
            <person name="Martienssen R."/>
            <person name="McCombie W.R."/>
            <person name="Wilson R.K."/>
            <person name="Murphy G."/>
            <person name="Bancroft I."/>
            <person name="Volckaert G."/>
            <person name="Wambutt R."/>
            <person name="Duesterhoeft A."/>
            <person name="Stiekema W."/>
            <person name="Pohl T."/>
            <person name="Entian K.-D."/>
            <person name="Terryn N."/>
            <person name="Hartley N."/>
            <person name="Bent E."/>
            <person name="Johnson S."/>
            <person name="Langham S.-A."/>
            <person name="McCullagh B."/>
            <person name="Robben J."/>
            <person name="Grymonprez B."/>
            <person name="Zimmermann W."/>
            <person name="Ramsperger U."/>
            <person name="Wedler H."/>
            <person name="Balke K."/>
            <person name="Wedler E."/>
            <person name="Peters S."/>
            <person name="van Staveren M."/>
            <person name="Dirkse W."/>
            <person name="Mooijman P."/>
            <person name="Klein Lankhorst R."/>
            <person name="Weitzenegger T."/>
            <person name="Bothe G."/>
            <person name="Rose M."/>
            <person name="Hauf J."/>
            <person name="Berneiser S."/>
            <person name="Hempel S."/>
            <person name="Feldpausch M."/>
            <person name="Lamberth S."/>
            <person name="Villarroel R."/>
            <person name="Gielen J."/>
            <person name="Ardiles W."/>
            <person name="Bents O."/>
            <person name="Lemcke K."/>
            <person name="Kolesov G."/>
            <person name="Mayer K.F.X."/>
            <person name="Rudd S."/>
            <person name="Schoof H."/>
            <person name="Schueller C."/>
            <person name="Zaccaria P."/>
            <person name="Mewes H.-W."/>
            <person name="Bevan M."/>
            <person name="Fransz P.F."/>
        </authorList>
    </citation>
    <scope>NUCLEOTIDE SEQUENCE [LARGE SCALE GENOMIC DNA]</scope>
    <source>
        <strain>cv. Columbia</strain>
    </source>
</reference>
<reference key="2">
    <citation type="journal article" date="2017" name="Plant J.">
        <title>Araport11: a complete reannotation of the Arabidopsis thaliana reference genome.</title>
        <authorList>
            <person name="Cheng C.Y."/>
            <person name="Krishnakumar V."/>
            <person name="Chan A.P."/>
            <person name="Thibaud-Nissen F."/>
            <person name="Schobel S."/>
            <person name="Town C.D."/>
        </authorList>
    </citation>
    <scope>GENOME REANNOTATION</scope>
    <source>
        <strain>cv. Columbia</strain>
    </source>
</reference>
<reference key="3">
    <citation type="journal article" date="2006" name="Plant Biotechnol. J.">
        <title>Simultaneous high-throughput recombinational cloning of open reading frames in closed and open configurations.</title>
        <authorList>
            <person name="Underwood B.A."/>
            <person name="Vanderhaeghen R."/>
            <person name="Whitford R."/>
            <person name="Town C.D."/>
            <person name="Hilson P."/>
        </authorList>
    </citation>
    <scope>NUCLEOTIDE SEQUENCE [LARGE SCALE MRNA]</scope>
    <source>
        <strain>cv. Columbia</strain>
    </source>
</reference>
<reference key="4">
    <citation type="journal article" date="2008" name="Plant Cell Physiol.">
        <title>Antagonistic jacalin-related lectins regulate the size of ER body-type beta-glucosidase complexes in Arabidopsis thaliana.</title>
        <authorList>
            <person name="Nagano A.J."/>
            <person name="Fukao Y."/>
            <person name="Fujiwara M."/>
            <person name="Nishimura M."/>
            <person name="Hara-Nishimura I."/>
        </authorList>
    </citation>
    <scope>GENE FAMILY</scope>
    <scope>NOMENCLATURE</scope>
</reference>
<reference key="5">
    <citation type="journal article" date="2013" name="Plant Mol. Biol.">
        <title>MIR846 and MIR842 comprise a cistronic MIRNA pair that is regulated by abscisic acid by alternative splicing in roots of Arabidopsis.</title>
        <authorList>
            <person name="Jia F."/>
            <person name="Rock C.D."/>
        </authorList>
    </citation>
    <scope>INDUCTION</scope>
    <scope>TISSUE SPECIFICITY</scope>
    <source>
        <strain>cv. Columbia</strain>
    </source>
</reference>
<reference key="6">
    <citation type="journal article" date="2013" name="Plant Signal. Behav.">
        <title>Jacalin lectin At5g28520 is regulated by ABA and miR846.</title>
        <authorList>
            <person name="Jia F."/>
            <person name="Rock C.D."/>
        </authorList>
    </citation>
    <scope>INDUCTION</scope>
    <scope>TISSUE SPECIFICITY</scope>
    <source>
        <strain>cv. Columbia</strain>
    </source>
</reference>
<accession>Q9LKR6</accession>
<evidence type="ECO:0000250" key="1">
    <source>
        <dbReference type="UniProtKB" id="Q9FGC5"/>
    </source>
</evidence>
<evidence type="ECO:0000255" key="2">
    <source>
        <dbReference type="PROSITE-ProRule" id="PRU01088"/>
    </source>
</evidence>
<evidence type="ECO:0000269" key="3">
    <source>
    </source>
</evidence>
<evidence type="ECO:0000269" key="4">
    <source>
    </source>
</evidence>
<evidence type="ECO:0000305" key="5"/>
<proteinExistence type="evidence at transcript level"/>
<protein>
    <recommendedName>
        <fullName>Jacalin-related lectin 40</fullName>
    </recommendedName>
</protein>
<comment type="tissue specificity">
    <text evidence="3 4">Expressed in roots.</text>
</comment>
<comment type="induction">
    <text evidence="3 4">Up-regulated by abscisic acid and abiotic stresses. Regulated by the microRNA miR846. Abscisic acid also represses the expression of miR846, thus increasing the accumulation of JAL40.</text>
</comment>
<comment type="similarity">
    <text evidence="2 5">Belongs to the jacalin lectin family.</text>
</comment>
<name>JAL40_ARATH</name>